<gene>
    <name type="primary">GPAT7</name>
    <name type="ordered locus">At5g06090</name>
    <name type="ORF">K16F4.5</name>
</gene>
<name>GPAT7_ARATH</name>
<protein>
    <recommendedName>
        <fullName>Glycerol-3-phosphate acyltransferase 7</fullName>
        <shortName>AtGPAT7</shortName>
        <ecNumber>2.3.1.15</ecNumber>
    </recommendedName>
</protein>
<dbReference type="EC" id="2.3.1.15"/>
<dbReference type="EMBL" id="AP002030">
    <property type="protein sequence ID" value="BAA98198.1"/>
    <property type="molecule type" value="Genomic_DNA"/>
</dbReference>
<dbReference type="EMBL" id="CP002688">
    <property type="protein sequence ID" value="AED90963.1"/>
    <property type="molecule type" value="Genomic_DNA"/>
</dbReference>
<dbReference type="RefSeq" id="NP_196227.1">
    <property type="nucleotide sequence ID" value="NM_120691.2"/>
</dbReference>
<dbReference type="STRING" id="3702.Q9LHS7"/>
<dbReference type="PaxDb" id="3702-AT5G06090.1"/>
<dbReference type="ProteomicsDB" id="247025"/>
<dbReference type="EnsemblPlants" id="AT5G06090.1">
    <property type="protein sequence ID" value="AT5G06090.1"/>
    <property type="gene ID" value="AT5G06090"/>
</dbReference>
<dbReference type="GeneID" id="830496"/>
<dbReference type="Gramene" id="AT5G06090.1">
    <property type="protein sequence ID" value="AT5G06090.1"/>
    <property type="gene ID" value="AT5G06090"/>
</dbReference>
<dbReference type="KEGG" id="ath:AT5G06090"/>
<dbReference type="Araport" id="AT5G06090"/>
<dbReference type="TAIR" id="AT5G06090">
    <property type="gene designation" value="GPAT7"/>
</dbReference>
<dbReference type="eggNOG" id="ENOG502QU9Z">
    <property type="taxonomic scope" value="Eukaryota"/>
</dbReference>
<dbReference type="HOGENOM" id="CLU_028504_1_0_1"/>
<dbReference type="InParanoid" id="Q9LHS7"/>
<dbReference type="OMA" id="WRAFGSC"/>
<dbReference type="PhylomeDB" id="Q9LHS7"/>
<dbReference type="BioCyc" id="ARA:AT5G06090-MONOMER"/>
<dbReference type="BRENDA" id="2.3.1.15">
    <property type="organism ID" value="399"/>
</dbReference>
<dbReference type="UniPathway" id="UPA00557">
    <property type="reaction ID" value="UER00612"/>
</dbReference>
<dbReference type="PRO" id="PR:Q9LHS7"/>
<dbReference type="Proteomes" id="UP000006548">
    <property type="component" value="Chromosome 5"/>
</dbReference>
<dbReference type="ExpressionAtlas" id="Q9LHS7">
    <property type="expression patterns" value="baseline and differential"/>
</dbReference>
<dbReference type="GO" id="GO:0016020">
    <property type="term" value="C:membrane"/>
    <property type="evidence" value="ECO:0007669"/>
    <property type="project" value="UniProtKB-SubCell"/>
</dbReference>
<dbReference type="GO" id="GO:0090447">
    <property type="term" value="F:glycerol-3-phosphate 2-O-acyltransferase activity"/>
    <property type="evidence" value="ECO:0007669"/>
    <property type="project" value="UniProtKB-ARBA"/>
</dbReference>
<dbReference type="GO" id="GO:0004366">
    <property type="term" value="F:glycerol-3-phosphate O-acyltransferase activity"/>
    <property type="evidence" value="ECO:0007669"/>
    <property type="project" value="UniProtKB-EC"/>
</dbReference>
<dbReference type="GO" id="GO:0016024">
    <property type="term" value="P:CDP-diacylglycerol biosynthetic process"/>
    <property type="evidence" value="ECO:0007669"/>
    <property type="project" value="UniProtKB-UniPathway"/>
</dbReference>
<dbReference type="CDD" id="cd06551">
    <property type="entry name" value="LPLAT"/>
    <property type="match status" value="1"/>
</dbReference>
<dbReference type="InterPro" id="IPR056462">
    <property type="entry name" value="HAD_RAM2/GPAT1-8"/>
</dbReference>
<dbReference type="InterPro" id="IPR002123">
    <property type="entry name" value="Plipid/glycerol_acylTrfase"/>
</dbReference>
<dbReference type="PANTHER" id="PTHR15486">
    <property type="entry name" value="ANCIENT UBIQUITOUS PROTEIN"/>
    <property type="match status" value="1"/>
</dbReference>
<dbReference type="PANTHER" id="PTHR15486:SF54">
    <property type="entry name" value="GLYCEROL-3-PHOSPHATE ACYLTRANSFERASE 7"/>
    <property type="match status" value="1"/>
</dbReference>
<dbReference type="Pfam" id="PF01553">
    <property type="entry name" value="Acyltransferase"/>
    <property type="match status" value="1"/>
</dbReference>
<dbReference type="Pfam" id="PF23270">
    <property type="entry name" value="HAD_RAM2_N"/>
    <property type="match status" value="1"/>
</dbReference>
<dbReference type="SMART" id="SM00563">
    <property type="entry name" value="PlsC"/>
    <property type="match status" value="1"/>
</dbReference>
<dbReference type="SUPFAM" id="SSF69593">
    <property type="entry name" value="Glycerol-3-phosphate (1)-acyltransferase"/>
    <property type="match status" value="1"/>
</dbReference>
<feature type="chain" id="PRO_0000195255" description="Glycerol-3-phosphate acyltransferase 7">
    <location>
        <begin position="1"/>
        <end position="500"/>
    </location>
</feature>
<feature type="transmembrane region" description="Helical" evidence="2">
    <location>
        <begin position="38"/>
        <end position="58"/>
    </location>
</feature>
<feature type="transmembrane region" description="Helical" evidence="2">
    <location>
        <begin position="235"/>
        <end position="255"/>
    </location>
</feature>
<feature type="short sequence motif" description="HXXXXD motif">
    <location>
        <begin position="298"/>
        <end position="303"/>
    </location>
</feature>
<reference key="1">
    <citation type="submission" date="2000-05" db="EMBL/GenBank/DDBJ databases">
        <title>Structural analysis of Arabidopsis thaliana chromosome 5. XI.</title>
        <authorList>
            <person name="Kaneko T."/>
            <person name="Katoh T."/>
            <person name="Asamizu E."/>
            <person name="Sato S."/>
            <person name="Nakamura Y."/>
            <person name="Kotani H."/>
            <person name="Tabata S."/>
        </authorList>
    </citation>
    <scope>NUCLEOTIDE SEQUENCE [LARGE SCALE GENOMIC DNA]</scope>
    <source>
        <strain>cv. Columbia</strain>
    </source>
</reference>
<reference key="2">
    <citation type="journal article" date="2017" name="Plant J.">
        <title>Araport11: a complete reannotation of the Arabidopsis thaliana reference genome.</title>
        <authorList>
            <person name="Cheng C.Y."/>
            <person name="Krishnakumar V."/>
            <person name="Chan A.P."/>
            <person name="Thibaud-Nissen F."/>
            <person name="Schobel S."/>
            <person name="Town C.D."/>
        </authorList>
    </citation>
    <scope>GENOME REANNOTATION</scope>
    <source>
        <strain>cv. Columbia</strain>
    </source>
</reference>
<reference key="3">
    <citation type="journal article" date="2003" name="Plant Cell">
        <title>Arabidopsis AtGPAT1, a member of the membrane-bound glycerol-3-phosphate acyltransferase gene family, is essential for tapetum differentiation and male fertility.</title>
        <authorList>
            <person name="Zheng Z."/>
            <person name="Xia Q."/>
            <person name="Dauk M."/>
            <person name="Shen W."/>
            <person name="Selvaraj G."/>
            <person name="Zou J."/>
        </authorList>
    </citation>
    <scope>ENZYME ACTIVITY</scope>
    <scope>BIOPHYSICOCHEMICAL PROPERTIES</scope>
    <scope>TISSUE SPECIFICITY</scope>
</reference>
<sequence length="500" mass="56082">MESSTTTSYSVVSELEGTLLKNPKPFAYFMLVAFEASGLIRFATLLFLWPIIALLDVLGYRNGSLKLMIFVATAGLHESEIESVARAVLPKFFMDDISMDAWRAFGSCDKRVVVTRMPRVMVERFAKDHLSADEVIGTEIVVNRFGYATGLIQETNVDQSVFNSVANLFVDRRPQLGLGRHIISDSPTFLSLCEEQVHAPVPSNYNGHNQRLHVQPLPVIFHDGRLVKLPTPATALIILLWIPFGIILAMIRIFVGFLLPLWAIPYVSRIFNTRFIVKGKPPAQATTGNPGVLFVCTHRTLMDPVVLSYVLGRSIPAVTYSISRLSEILSPIPTFRLTRIRDVDAEMIKKELSNGDLVVYPEGTTCREPFLLRFSALFAELTDNIVPVAMNYRVGFFHATTARGWKGLDPIFFFMNPRPVYEVTFLNQLEVEATCSSGKSPYDVANYVQRILAATLGFECTNFTRKDKYRVLAGNDGTVSYLSFLDQVKKVVTTFKPFLH</sequence>
<comment type="function">
    <text>Esterifies acyl-group from acyl-ACP to the sn-1 position of glycerol-3-phosphate, an essential step in glycerolipid biosynthesis.</text>
</comment>
<comment type="catalytic activity">
    <reaction evidence="3">
        <text>sn-glycerol 3-phosphate + an acyl-CoA = a 1-acyl-sn-glycero-3-phosphate + CoA</text>
        <dbReference type="Rhea" id="RHEA:15325"/>
        <dbReference type="ChEBI" id="CHEBI:57287"/>
        <dbReference type="ChEBI" id="CHEBI:57597"/>
        <dbReference type="ChEBI" id="CHEBI:57970"/>
        <dbReference type="ChEBI" id="CHEBI:58342"/>
        <dbReference type="EC" id="2.3.1.15"/>
    </reaction>
</comment>
<comment type="biophysicochemical properties">
    <kinetics>
        <Vmax evidence="3">58.93 pmol/min/mg enzyme</Vmax>
    </kinetics>
</comment>
<comment type="pathway">
    <text>Phospholipid metabolism; CDP-diacylglycerol biosynthesis; CDP-diacylglycerol from sn-glycerol 3-phosphate: step 1/3.</text>
</comment>
<comment type="subcellular location">
    <subcellularLocation>
        <location evidence="4">Membrane</location>
        <topology evidence="4">Multi-pass membrane protein</topology>
    </subcellularLocation>
</comment>
<comment type="tissue specificity">
    <text evidence="3">Weakly or not expressed in roots, leaves, seedlings, developing siliques and flower buds.</text>
</comment>
<comment type="domain">
    <text evidence="1">The HXXXXD motif is essential for acyltransferase activity and may constitute the binding site for the phosphate moiety of the glycerol-3-phosphate.</text>
</comment>
<comment type="similarity">
    <text evidence="4">Belongs to the GPAT/DAPAT family.</text>
</comment>
<evidence type="ECO:0000250" key="1"/>
<evidence type="ECO:0000255" key="2"/>
<evidence type="ECO:0000269" key="3">
    <source>
    </source>
</evidence>
<evidence type="ECO:0000305" key="4"/>
<proteinExistence type="evidence at protein level"/>
<organism>
    <name type="scientific">Arabidopsis thaliana</name>
    <name type="common">Mouse-ear cress</name>
    <dbReference type="NCBI Taxonomy" id="3702"/>
    <lineage>
        <taxon>Eukaryota</taxon>
        <taxon>Viridiplantae</taxon>
        <taxon>Streptophyta</taxon>
        <taxon>Embryophyta</taxon>
        <taxon>Tracheophyta</taxon>
        <taxon>Spermatophyta</taxon>
        <taxon>Magnoliopsida</taxon>
        <taxon>eudicotyledons</taxon>
        <taxon>Gunneridae</taxon>
        <taxon>Pentapetalae</taxon>
        <taxon>rosids</taxon>
        <taxon>malvids</taxon>
        <taxon>Brassicales</taxon>
        <taxon>Brassicaceae</taxon>
        <taxon>Camelineae</taxon>
        <taxon>Arabidopsis</taxon>
    </lineage>
</organism>
<accession>Q9LHS7</accession>
<keyword id="KW-0012">Acyltransferase</keyword>
<keyword id="KW-0444">Lipid biosynthesis</keyword>
<keyword id="KW-0443">Lipid metabolism</keyword>
<keyword id="KW-0472">Membrane</keyword>
<keyword id="KW-0594">Phospholipid biosynthesis</keyword>
<keyword id="KW-1208">Phospholipid metabolism</keyword>
<keyword id="KW-1185">Reference proteome</keyword>
<keyword id="KW-0808">Transferase</keyword>
<keyword id="KW-0812">Transmembrane</keyword>
<keyword id="KW-1133">Transmembrane helix</keyword>